<gene>
    <name evidence="21" type="primary">lag-1</name>
    <name evidence="21" type="ORF">K08B4.1</name>
</gene>
<sequence length="790" mass="87732">MFSWRRGDCESQKEENRSEERKGEETIRFPTRSPFHCVLFLLTDGFVLHKPTASPTVGFSPTIFSFYYSRWESSHRISHDESGFCTAKTPLQDSTFTRHPSTSVPSSPSTPRHSGMDYHQSSSVASSESTASTVAAAAAAAAAASLNQHHHPHLYCDDGLLSRSLTDMVSSGGYDSSSSSLSAAASMCYPTPDAYYYHAPPPPPPPQAQQGFSSTDAWLQMQMQPTYHNFGSTVVSTNSPLPSHLLSYGGQPAFADPFYTIGQSTPNTSSFLDTSNSSFGAPSTVVANPMTNYQLAFQAKLGSLHSLIGDSVQSLTSDRMIDFLSNKEKYECVISIFHAKVAQKSYGNEKRFFCPPPCIYLIGQGWKLKKDRVAQLYKTLKASAQKDAAIENDPIHEQQATELVAYIGIGSDTSERQQLDFSTGKVRHPGDQRQDPNIYDYCAAKTLYISDSDKRKYFDLNAQFFYGCGMEIGGFVSQRIKVISKPSKKKQSMKNTDCKYLCIASGTKVALFNRLRSQTVSTRYLHVEGNAFHASSTKWGAFTIHLFDDERGLQETDNFAVRDGFVYYGSVVKLVDSVTGIALPRLRIRKVDKQQVILDASCSEEPVSQLHKCAFQMIDNELVYLCLSHDKIIQHQATAINEHRHQINDGAAWTIISTDKAEYRFFEAMGQVANPISPCPVVGSLEVDGHGEASRVELHGRDFKPNLKVWFGATPVETTFRSEESLHCSIPPVSQVRNEQTHWMFTNRTTGDVEVPISLVRDDGVVYSSGLTFSYKSLERHGPCRIVSNY</sequence>
<accession>V6CLJ5</accession>
<accession>G5EDU7</accession>
<accession>Q8MXE7</accession>
<accession>V6CK60</accession>
<keyword id="KW-0002">3D-structure</keyword>
<keyword id="KW-0025">Alternative splicing</keyword>
<keyword id="KW-0238">DNA-binding</keyword>
<keyword id="KW-0914">Notch signaling pathway</keyword>
<keyword id="KW-0539">Nucleus</keyword>
<keyword id="KW-1185">Reference proteome</keyword>
<keyword id="KW-0804">Transcription</keyword>
<keyword id="KW-0805">Transcription regulation</keyword>
<reference evidence="16" key="1">
    <citation type="journal article" date="1996" name="Development">
        <title>lag-1, a gene required for lin-12 and glp-1 signaling in Caenorhabditis elegans, is homologous to human CBF1 and Drosophila Su(H).</title>
        <authorList>
            <person name="Christensen S."/>
            <person name="Kodoyianni V."/>
            <person name="Bosenberg M."/>
            <person name="Friedman L."/>
            <person name="Kimble J."/>
        </authorList>
    </citation>
    <scope>FUNCTION</scope>
    <scope>NUCLEOTIDE SEQUENCE [MRNA] (ISOFORM A)</scope>
    <scope>MUTAGENESIS OF 743-TRP--TYR-790</scope>
    <source>
        <strain evidence="16">Bristol N2</strain>
    </source>
</reference>
<reference evidence="17" key="2">
    <citation type="journal article" date="1998" name="Science">
        <title>Genome sequence of the nematode C. elegans: a platform for investigating biology.</title>
        <authorList>
            <consortium name="The C. elegans sequencing consortium"/>
        </authorList>
    </citation>
    <scope>NUCLEOTIDE SEQUENCE [LARGE SCALE GENOMIC DNA]</scope>
    <source>
        <strain evidence="17">Bristol N2</strain>
    </source>
</reference>
<reference key="3">
    <citation type="journal article" date="1996" name="EMBO J.">
        <title>Roles of the RAM and ANK domains in signaling by the C. elegans GLP-1 receptor.</title>
        <authorList>
            <person name="Roehl H."/>
            <person name="Bosenberg M."/>
            <person name="Blelloch R."/>
            <person name="Kimble J."/>
        </authorList>
    </citation>
    <scope>FUNCTION</scope>
</reference>
<reference evidence="15" key="4">
    <citation type="journal article" date="2000" name="Nature">
        <title>LAG-3 is a putative transcriptional activator in the C. elegans Notch pathway.</title>
        <authorList>
            <person name="Petcherski A.G."/>
            <person name="Kimble J."/>
        </authorList>
    </citation>
    <scope>FUNCTION</scope>
    <scope>INTERACTION WITH LAG-3</scope>
</reference>
<reference evidence="15" key="5">
    <citation type="journal article" date="2008" name="Dev. Biol.">
        <title>The CSL transcription factor LAG-1 directly represses hlh-6 expression in C. elegans.</title>
        <authorList>
            <person name="Ghai V."/>
            <person name="Gaudet J."/>
        </authorList>
    </citation>
    <scope>FUNCTION</scope>
    <scope>DISRUPTION PHENOTYPE</scope>
</reference>
<reference evidence="15" key="6">
    <citation type="journal article" date="2013" name="BMB Rep.">
        <title>Clustered LAG-1 binding sites in lag-1/CSL are involved in regulating lag-1 expression during lin-12/Notch-dependent cell-fate specification.</title>
        <authorList>
            <person name="Choi V.N."/>
            <person name="Park S.K."/>
            <person name="Hwang B.J."/>
        </authorList>
    </citation>
    <scope>FUNCTION</scope>
    <scope>DEVELOPMENTAL STAGE</scope>
</reference>
<reference evidence="15" key="7">
    <citation type="journal article" date="2020" name="Development">
        <title>Positive autoregulation of lag-1 in response to LIN-12 activation in cell fate decisions during C. elegans reproductive system development.</title>
        <authorList>
            <person name="Luo K.L."/>
            <person name="Underwood R.S."/>
            <person name="Greenwald I."/>
        </authorList>
    </citation>
    <scope>FUNCTION</scope>
    <scope>DEVELOPMENTAL STAGE</scope>
</reference>
<reference key="8">
    <citation type="journal article" date="2020" name="PLoS Genet.">
        <title>GLP-1 Notch-LAG-1 CSL control of the germline stem cell fate is mediated by transcriptional targets lst-1 and sygl-1.</title>
        <authorList>
            <person name="Chen J."/>
            <person name="Mohammad A."/>
            <person name="Pazdernik N."/>
            <person name="Huang H."/>
            <person name="Bowman B."/>
            <person name="Tycksen E."/>
            <person name="Schedl T."/>
        </authorList>
    </citation>
    <scope>FUNCTION</scope>
    <scope>SUBCELLULAR LOCATION</scope>
    <scope>TISSUE SPECIFICITY</scope>
    <scope>DEVELOPMENTAL STAGE</scope>
</reference>
<reference evidence="22" key="9">
    <citation type="journal article" date="2004" name="EMBO J.">
        <title>Crystal structure of the nuclear effector of Notch signaling, CSL, bound to DNA.</title>
        <authorList>
            <person name="Kovall R.A."/>
            <person name="Hendrickson W.A."/>
        </authorList>
    </citation>
    <scope>X-RAY CRYSTALLOGRAPHY (2.85 ANGSTROMS) OF 309-780 IN COMPLEX WITH DNA</scope>
    <scope>FUNCTION</scope>
</reference>
<reference evidence="23" key="10">
    <citation type="journal article" date="2006" name="Cell">
        <title>Crystal structure of the CSL-Notch-Mastermind ternary complex bound to DNA.</title>
        <authorList>
            <person name="Wilson J.J."/>
            <person name="Kovall R.A."/>
        </authorList>
    </citation>
    <scope>X-RAY CRYSTALLOGRAPHY (3.12 ANGSTROMS) OF 309-780 IN COMPLEX WITH LIN-12; LAG-3 AND DNA</scope>
</reference>
<reference evidence="24" key="11">
    <citation type="journal article" date="2008" name="J. Biol. Chem.">
        <title>RAM-induced allostery facilitates assembly of a notch pathway active transcription complex.</title>
        <authorList>
            <person name="Friedmann D.R."/>
            <person name="Wilson J.J."/>
            <person name="Kovall R.A."/>
        </authorList>
    </citation>
    <scope>X-RAY CRYSTALLOGRAPHY (2.21 ANGSTROMS) OF 309-780 IN COMPLEX WITH LIN-12 AND DNA</scope>
    <scope>FUNCTION</scope>
</reference>
<reference key="12">
    <citation type="journal article" date="2011" name="Curr. Biol.">
        <title>Notch-dependent induction of left/right asymmetry in C. elegans interneurons and motoneurons.</title>
        <authorList>
            <person name="Bertrand V."/>
            <person name="Bisso P."/>
            <person name="Poole R.J."/>
            <person name="Hobert O."/>
        </authorList>
    </citation>
    <scope>FUNCTION</scope>
</reference>
<name>LAG1_CAEEL</name>
<dbReference type="EMBL" id="BX284604">
    <property type="protein sequence ID" value="CCD72375.1"/>
    <property type="molecule type" value="Genomic_DNA"/>
</dbReference>
<dbReference type="EMBL" id="BX284604">
    <property type="protein sequence ID" value="CCD72376.1"/>
    <property type="molecule type" value="Genomic_DNA"/>
</dbReference>
<dbReference type="EMBL" id="BX284604">
    <property type="protein sequence ID" value="CDK13424.1"/>
    <property type="molecule type" value="Genomic_DNA"/>
</dbReference>
<dbReference type="EMBL" id="BX284604">
    <property type="protein sequence ID" value="CDK13425.1"/>
    <property type="molecule type" value="Genomic_DNA"/>
</dbReference>
<dbReference type="EMBL" id="U49794">
    <property type="protein sequence ID" value="AAB03858.1"/>
    <property type="molecule type" value="mRNA"/>
</dbReference>
<dbReference type="EMBL" id="U49795">
    <property type="protein sequence ID" value="AAB03859.1"/>
    <property type="molecule type" value="Genomic_DNA"/>
</dbReference>
<dbReference type="PIR" id="T33741">
    <property type="entry name" value="T33741"/>
</dbReference>
<dbReference type="RefSeq" id="NP_001023278.1">
    <molecule id="V6CLJ5-2"/>
    <property type="nucleotide sequence ID" value="NM_001028107.5"/>
</dbReference>
<dbReference type="RefSeq" id="NP_001293739.1">
    <property type="nucleotide sequence ID" value="NM_001306810.1"/>
</dbReference>
<dbReference type="RefSeq" id="NP_001293740.1">
    <molecule id="V6CLJ5-1"/>
    <property type="nucleotide sequence ID" value="NM_001306811.4"/>
</dbReference>
<dbReference type="RefSeq" id="NP_001368385.1">
    <molecule id="V6CLJ5-4"/>
    <property type="nucleotide sequence ID" value="NM_001380259.1"/>
</dbReference>
<dbReference type="RefSeq" id="NP_741410.1">
    <molecule id="V6CLJ5-3"/>
    <property type="nucleotide sequence ID" value="NM_171350.7"/>
</dbReference>
<dbReference type="PDB" id="1TTU">
    <property type="method" value="X-ray"/>
    <property type="resolution" value="2.85 A"/>
    <property type="chains" value="A=309-780"/>
</dbReference>
<dbReference type="PDB" id="2FO1">
    <property type="method" value="X-ray"/>
    <property type="resolution" value="3.12 A"/>
    <property type="chains" value="A=309-780"/>
</dbReference>
<dbReference type="PDB" id="3BRD">
    <property type="method" value="X-ray"/>
    <property type="resolution" value="2.21 A"/>
    <property type="chains" value="A=309-780"/>
</dbReference>
<dbReference type="PDBsum" id="1TTU"/>
<dbReference type="PDBsum" id="2FO1"/>
<dbReference type="PDBsum" id="3BRD"/>
<dbReference type="SMR" id="V6CLJ5"/>
<dbReference type="ComplexPortal" id="CPX-3152">
    <property type="entry name" value="CSL-Notch-Mastermind transcription factor complex"/>
</dbReference>
<dbReference type="FunCoup" id="V6CLJ5">
    <property type="interactions" value="2535"/>
</dbReference>
<dbReference type="IntAct" id="V6CLJ5">
    <property type="interactions" value="15"/>
</dbReference>
<dbReference type="MINT" id="V6CLJ5"/>
<dbReference type="STRING" id="6239.K08B4.1d.1"/>
<dbReference type="PaxDb" id="6239-K08B4.1a"/>
<dbReference type="EnsemblMetazoa" id="K08B4.1a.1">
    <molecule id="V6CLJ5-3"/>
    <property type="protein sequence ID" value="K08B4.1a.1"/>
    <property type="gene ID" value="WBGene00002245"/>
</dbReference>
<dbReference type="EnsemblMetazoa" id="K08B4.1b.1">
    <molecule id="V6CLJ5-2"/>
    <property type="protein sequence ID" value="K08B4.1b.1"/>
    <property type="gene ID" value="WBGene00002245"/>
</dbReference>
<dbReference type="EnsemblMetazoa" id="K08B4.1c.1">
    <molecule id="V6CLJ5-4"/>
    <property type="protein sequence ID" value="K08B4.1c.1"/>
    <property type="gene ID" value="WBGene00002245"/>
</dbReference>
<dbReference type="EnsemblMetazoa" id="K08B4.1d.1">
    <molecule id="V6CLJ5-1"/>
    <property type="protein sequence ID" value="K08B4.1d.1"/>
    <property type="gene ID" value="WBGene00002245"/>
</dbReference>
<dbReference type="GeneID" id="177373"/>
<dbReference type="KEGG" id="cel:CELE_K08B4.1"/>
<dbReference type="UCSC" id="K08B4.1a">
    <property type="organism name" value="c. elegans"/>
</dbReference>
<dbReference type="AGR" id="WB:WBGene00002245"/>
<dbReference type="CTD" id="177373"/>
<dbReference type="WormBase" id="K08B4.1a">
    <molecule id="V6CLJ5-3"/>
    <property type="protein sequence ID" value="CE28839"/>
    <property type="gene ID" value="WBGene00002245"/>
    <property type="gene designation" value="lag-1"/>
</dbReference>
<dbReference type="WormBase" id="K08B4.1b">
    <molecule id="V6CLJ5-2"/>
    <property type="protein sequence ID" value="CE25048"/>
    <property type="gene ID" value="WBGene00002245"/>
    <property type="gene designation" value="lag-1"/>
</dbReference>
<dbReference type="WormBase" id="K08B4.1c">
    <molecule id="V6CLJ5-4"/>
    <property type="protein sequence ID" value="CE49374"/>
    <property type="gene ID" value="WBGene00002245"/>
    <property type="gene designation" value="lag-1"/>
</dbReference>
<dbReference type="WormBase" id="K08B4.1d">
    <molecule id="V6CLJ5-1"/>
    <property type="protein sequence ID" value="CE49360"/>
    <property type="gene ID" value="WBGene00002245"/>
    <property type="gene designation" value="lag-1"/>
</dbReference>
<dbReference type="eggNOG" id="KOG3743">
    <property type="taxonomic scope" value="Eukaryota"/>
</dbReference>
<dbReference type="GeneTree" id="ENSGT00390000005197"/>
<dbReference type="HOGENOM" id="CLU_022207_1_0_1"/>
<dbReference type="InParanoid" id="V6CLJ5"/>
<dbReference type="OMA" id="HNTSAWI"/>
<dbReference type="OrthoDB" id="5600360at2759"/>
<dbReference type="SignaLink" id="V6CLJ5"/>
<dbReference type="EvolutionaryTrace" id="V6CLJ5"/>
<dbReference type="PRO" id="PR:V6CLJ5"/>
<dbReference type="Proteomes" id="UP000001940">
    <property type="component" value="Chromosome IV"/>
</dbReference>
<dbReference type="Bgee" id="WBGene00002245">
    <property type="expression patterns" value="Expressed in embryo and 4 other cell types or tissues"/>
</dbReference>
<dbReference type="ExpressionAtlas" id="V6CLJ5">
    <property type="expression patterns" value="baseline and differential"/>
</dbReference>
<dbReference type="GO" id="GO:0000785">
    <property type="term" value="C:chromatin"/>
    <property type="evidence" value="ECO:0000314"/>
    <property type="project" value="UniProtKB"/>
</dbReference>
<dbReference type="GO" id="GO:1990433">
    <property type="term" value="C:CSL-Notch-Mastermind transcription factor complex"/>
    <property type="evidence" value="ECO:0000353"/>
    <property type="project" value="ComplexPortal"/>
</dbReference>
<dbReference type="GO" id="GO:0005634">
    <property type="term" value="C:nucleus"/>
    <property type="evidence" value="ECO:0000314"/>
    <property type="project" value="WormBase"/>
</dbReference>
<dbReference type="GO" id="GO:0090575">
    <property type="term" value="C:RNA polymerase II transcription regulator complex"/>
    <property type="evidence" value="ECO:0000314"/>
    <property type="project" value="WormBase"/>
</dbReference>
<dbReference type="GO" id="GO:0001228">
    <property type="term" value="F:DNA-binding transcription activator activity, RNA polymerase II-specific"/>
    <property type="evidence" value="ECO:0007669"/>
    <property type="project" value="InterPro"/>
</dbReference>
<dbReference type="GO" id="GO:0000981">
    <property type="term" value="F:DNA-binding transcription factor activity, RNA polymerase II-specific"/>
    <property type="evidence" value="ECO:0000318"/>
    <property type="project" value="GO_Central"/>
</dbReference>
<dbReference type="GO" id="GO:0003690">
    <property type="term" value="F:double-stranded DNA binding"/>
    <property type="evidence" value="ECO:0000314"/>
    <property type="project" value="WormBase"/>
</dbReference>
<dbReference type="GO" id="GO:0005112">
    <property type="term" value="F:Notch binding"/>
    <property type="evidence" value="ECO:0000353"/>
    <property type="project" value="UniProtKB"/>
</dbReference>
<dbReference type="GO" id="GO:0000978">
    <property type="term" value="F:RNA polymerase II cis-regulatory region sequence-specific DNA binding"/>
    <property type="evidence" value="ECO:0000314"/>
    <property type="project" value="UniProtKB"/>
</dbReference>
<dbReference type="GO" id="GO:0043565">
    <property type="term" value="F:sequence-specific DNA binding"/>
    <property type="evidence" value="ECO:0000314"/>
    <property type="project" value="UniProtKB"/>
</dbReference>
<dbReference type="GO" id="GO:0001223">
    <property type="term" value="F:transcription coactivator binding"/>
    <property type="evidence" value="ECO:0000353"/>
    <property type="project" value="UniProtKB"/>
</dbReference>
<dbReference type="GO" id="GO:0001709">
    <property type="term" value="P:cell fate determination"/>
    <property type="evidence" value="ECO:0000315"/>
    <property type="project" value="UniProtKB"/>
</dbReference>
<dbReference type="GO" id="GO:0001708">
    <property type="term" value="P:cell fate specification"/>
    <property type="evidence" value="ECO:0000315"/>
    <property type="project" value="WormBase"/>
</dbReference>
<dbReference type="GO" id="GO:0048858">
    <property type="term" value="P:cell projection morphogenesis"/>
    <property type="evidence" value="ECO:0000315"/>
    <property type="project" value="UniProtKB"/>
</dbReference>
<dbReference type="GO" id="GO:0043054">
    <property type="term" value="P:dauer exit"/>
    <property type="evidence" value="ECO:0000316"/>
    <property type="project" value="WormBase"/>
</dbReference>
<dbReference type="GO" id="GO:0018991">
    <property type="term" value="P:egg-laying behavior"/>
    <property type="evidence" value="ECO:0000315"/>
    <property type="project" value="WormBase"/>
</dbReference>
<dbReference type="GO" id="GO:0042078">
    <property type="term" value="P:germ-line stem cell division"/>
    <property type="evidence" value="ECO:0000315"/>
    <property type="project" value="WormBase"/>
</dbReference>
<dbReference type="GO" id="GO:0000122">
    <property type="term" value="P:negative regulation of transcription by RNA polymerase II"/>
    <property type="evidence" value="ECO:0000315"/>
    <property type="project" value="UniProtKB"/>
</dbReference>
<dbReference type="GO" id="GO:0002119">
    <property type="term" value="P:nematode larval development"/>
    <property type="evidence" value="ECO:0000315"/>
    <property type="project" value="WormBase"/>
</dbReference>
<dbReference type="GO" id="GO:0007219">
    <property type="term" value="P:Notch signaling pathway"/>
    <property type="evidence" value="ECO:0000353"/>
    <property type="project" value="WormBase"/>
</dbReference>
<dbReference type="GO" id="GO:0001555">
    <property type="term" value="P:oocyte growth"/>
    <property type="evidence" value="ECO:0000315"/>
    <property type="project" value="UniProtKB"/>
</dbReference>
<dbReference type="GO" id="GO:0045893">
    <property type="term" value="P:positive regulation of DNA-templated transcription"/>
    <property type="evidence" value="ECO:0000303"/>
    <property type="project" value="ComplexPortal"/>
</dbReference>
<dbReference type="GO" id="GO:1902895">
    <property type="term" value="P:positive regulation of miRNA transcription"/>
    <property type="evidence" value="ECO:0000315"/>
    <property type="project" value="UniProtKB"/>
</dbReference>
<dbReference type="GO" id="GO:0045944">
    <property type="term" value="P:positive regulation of transcription by RNA polymerase II"/>
    <property type="evidence" value="ECO:0000315"/>
    <property type="project" value="UniProtKB"/>
</dbReference>
<dbReference type="GO" id="GO:0040026">
    <property type="term" value="P:positive regulation of vulval development"/>
    <property type="evidence" value="ECO:0000315"/>
    <property type="project" value="WormBase"/>
</dbReference>
<dbReference type="GO" id="GO:0042659">
    <property type="term" value="P:regulation of cell fate specification"/>
    <property type="evidence" value="ECO:0000315"/>
    <property type="project" value="WormBase"/>
</dbReference>
<dbReference type="GO" id="GO:0010468">
    <property type="term" value="P:regulation of gene expression"/>
    <property type="evidence" value="ECO:0000315"/>
    <property type="project" value="UniProtKB"/>
</dbReference>
<dbReference type="GO" id="GO:0042661">
    <property type="term" value="P:regulation of mesodermal cell fate specification"/>
    <property type="evidence" value="ECO:0000315"/>
    <property type="project" value="UniProtKB"/>
</dbReference>
<dbReference type="GO" id="GO:0006357">
    <property type="term" value="P:regulation of transcription by RNA polymerase II"/>
    <property type="evidence" value="ECO:0000314"/>
    <property type="project" value="UniProtKB"/>
</dbReference>
<dbReference type="GO" id="GO:0048867">
    <property type="term" value="P:stem cell fate determination"/>
    <property type="evidence" value="ECO:0000315"/>
    <property type="project" value="UniProtKB"/>
</dbReference>
<dbReference type="FunFam" id="2.60.40.10:FF:002236">
    <property type="entry name" value="Lin-12 And Glp-1 phenotype"/>
    <property type="match status" value="1"/>
</dbReference>
<dbReference type="FunFam" id="2.80.10.50:FF:000003">
    <property type="entry name" value="recombining binding protein suppressor of hairless"/>
    <property type="match status" value="1"/>
</dbReference>
<dbReference type="FunFam" id="2.60.40.1450:FF:000003">
    <property type="entry name" value="Related to J kappa-recombination signal binding protein"/>
    <property type="match status" value="1"/>
</dbReference>
<dbReference type="Gene3D" id="2.80.10.50">
    <property type="match status" value="1"/>
</dbReference>
<dbReference type="Gene3D" id="2.60.40.10">
    <property type="entry name" value="Immunoglobulins"/>
    <property type="match status" value="1"/>
</dbReference>
<dbReference type="Gene3D" id="2.60.40.1450">
    <property type="entry name" value="LAG1, DNA binding domain"/>
    <property type="match status" value="1"/>
</dbReference>
<dbReference type="IDEAL" id="IID50096"/>
<dbReference type="InterPro" id="IPR015350">
    <property type="entry name" value="Beta-trefoil_DNA-bd_dom"/>
</dbReference>
<dbReference type="InterPro" id="IPR036358">
    <property type="entry name" value="BTD_sf"/>
</dbReference>
<dbReference type="InterPro" id="IPR040159">
    <property type="entry name" value="CLS_fam"/>
</dbReference>
<dbReference type="InterPro" id="IPR013783">
    <property type="entry name" value="Ig-like_fold"/>
</dbReference>
<dbReference type="InterPro" id="IPR014756">
    <property type="entry name" value="Ig_E-set"/>
</dbReference>
<dbReference type="InterPro" id="IPR008967">
    <property type="entry name" value="p53-like_TF_DNA-bd_sf"/>
</dbReference>
<dbReference type="InterPro" id="IPR015351">
    <property type="entry name" value="RBP-J/Cbf11/Cbf12_DNA-bd"/>
</dbReference>
<dbReference type="InterPro" id="IPR037095">
    <property type="entry name" value="RBP-J/Cbf11_DNA-bd_sf"/>
</dbReference>
<dbReference type="InterPro" id="IPR038007">
    <property type="entry name" value="RBP-Jkappa_IPT"/>
</dbReference>
<dbReference type="PANTHER" id="PTHR10665">
    <property type="entry name" value="RECOMBINING BINDING PROTEIN SUPPRESSOR OF HAIRLESS"/>
    <property type="match status" value="1"/>
</dbReference>
<dbReference type="Pfam" id="PF09270">
    <property type="entry name" value="BTD"/>
    <property type="match status" value="1"/>
</dbReference>
<dbReference type="Pfam" id="PF09271">
    <property type="entry name" value="LAG1-DNAbind"/>
    <property type="match status" value="1"/>
</dbReference>
<dbReference type="Pfam" id="PF20144">
    <property type="entry name" value="TIG_SUH"/>
    <property type="match status" value="1"/>
</dbReference>
<dbReference type="SMART" id="SM01268">
    <property type="entry name" value="BTD"/>
    <property type="match status" value="1"/>
</dbReference>
<dbReference type="SMART" id="SM01267">
    <property type="entry name" value="LAG1_DNAbind"/>
    <property type="match status" value="1"/>
</dbReference>
<dbReference type="SUPFAM" id="SSF110217">
    <property type="entry name" value="DNA-binding protein LAG-1 (CSL)"/>
    <property type="match status" value="1"/>
</dbReference>
<dbReference type="SUPFAM" id="SSF81296">
    <property type="entry name" value="E set domains"/>
    <property type="match status" value="1"/>
</dbReference>
<dbReference type="SUPFAM" id="SSF49417">
    <property type="entry name" value="p53-like transcription factors"/>
    <property type="match status" value="1"/>
</dbReference>
<evidence type="ECO:0000250" key="1">
    <source>
        <dbReference type="UniProtKB" id="P28159"/>
    </source>
</evidence>
<evidence type="ECO:0000250" key="2">
    <source>
        <dbReference type="UniProtKB" id="Q06330"/>
    </source>
</evidence>
<evidence type="ECO:0000256" key="3">
    <source>
        <dbReference type="SAM" id="MobiDB-lite"/>
    </source>
</evidence>
<evidence type="ECO:0000269" key="4">
    <source>
    </source>
</evidence>
<evidence type="ECO:0000269" key="5">
    <source>
    </source>
</evidence>
<evidence type="ECO:0000269" key="6">
    <source>
    </source>
</evidence>
<evidence type="ECO:0000269" key="7">
    <source>
    </source>
</evidence>
<evidence type="ECO:0000269" key="8">
    <source>
    </source>
</evidence>
<evidence type="ECO:0000269" key="9">
    <source>
    </source>
</evidence>
<evidence type="ECO:0000269" key="10">
    <source>
    </source>
</evidence>
<evidence type="ECO:0000269" key="11">
    <source>
    </source>
</evidence>
<evidence type="ECO:0000269" key="12">
    <source>
    </source>
</evidence>
<evidence type="ECO:0000269" key="13">
    <source>
    </source>
</evidence>
<evidence type="ECO:0000303" key="14">
    <source>
    </source>
</evidence>
<evidence type="ECO:0000305" key="15"/>
<evidence type="ECO:0000312" key="16">
    <source>
        <dbReference type="EMBL" id="AAB03858.1"/>
    </source>
</evidence>
<evidence type="ECO:0000312" key="17">
    <source>
        <dbReference type="Proteomes" id="UP000001940"/>
    </source>
</evidence>
<evidence type="ECO:0000312" key="18">
    <source>
        <dbReference type="WormBase" id="K08B4.1a"/>
    </source>
</evidence>
<evidence type="ECO:0000312" key="19">
    <source>
        <dbReference type="WormBase" id="K08B4.1b"/>
    </source>
</evidence>
<evidence type="ECO:0000312" key="20">
    <source>
        <dbReference type="WormBase" id="K08B4.1c"/>
    </source>
</evidence>
<evidence type="ECO:0000312" key="21">
    <source>
        <dbReference type="WormBase" id="K08B4.1d"/>
    </source>
</evidence>
<evidence type="ECO:0007744" key="22">
    <source>
        <dbReference type="PDB" id="1TTU"/>
    </source>
</evidence>
<evidence type="ECO:0007744" key="23">
    <source>
        <dbReference type="PDB" id="2FO1"/>
    </source>
</evidence>
<evidence type="ECO:0007744" key="24">
    <source>
        <dbReference type="PDB" id="3BRD"/>
    </source>
</evidence>
<evidence type="ECO:0007829" key="25">
    <source>
        <dbReference type="PDB" id="1TTU"/>
    </source>
</evidence>
<evidence type="ECO:0007829" key="26">
    <source>
        <dbReference type="PDB" id="2FO1"/>
    </source>
</evidence>
<evidence type="ECO:0007829" key="27">
    <source>
        <dbReference type="PDB" id="3BRD"/>
    </source>
</evidence>
<comment type="function">
    <text evidence="1 4 5 7 8 9 10 11 12 13">Transcriptional regulator that plays a central role in lin-12/Notch and glp-1/Notch signaling pathways, involved in cell-cell communication that regulate a broad spectrum of cell-fate determinations (PubMed:8625826). Binds directly to the 5'-[A/G]TGGGAA-3' DNA consensus sequence, which is present in the regulatory region of several genes (PubMed:15297877, PubMed:18706403, PubMed:21737278, PubMed:23615264, PubMed:32196486, PubMed:8625826). Acts as a transcriptional repressor when it is not associated with Notch proteins (By similarity). When in a complex with a Notch intracellular domain (NICD) product of lin-12/Notch or glp-1/Notch, and transcription regulator lag-3, it may act as a transcriptional activator that activates transcription of target genes (PubMed:10830967, PubMed:18381292, PubMed:32196486, PubMed:9003776). Probably represses or activates transcription via the recruitment of chromatin remodeling complexes containing histone deacetylase or histone acetylase proteins, respectively (By similarity). Autonomously required in the germline for the stem cell fate, acting in the glp-1-dependent transcriptional activation of genes, including lst-1 and sygl-1 (PubMed:32196486). Involved in cell-fate specification during reproductive system development, by positively autoregulating its own expression, in response to lin-12/Notch signaling (PubMed:23615264, PubMed:32839181). Plays a role in Notch-dependent induction of left-right asymmetry in interneurons and motoneurons (PubMed:21737278). May repress expression of hlh-6, in a lin-12/Notch-independent manner (PubMed:18706403).</text>
</comment>
<comment type="subunit">
    <text evidence="4 6 7">Component of a complex consisting of at least a lin-12/Notch intracellular domain (NICD), lag-1, and lag-3 (PubMed:10830967, PubMed:16530045, PubMed:18381292). An NICD product of lin-12/Notch, including the RBP-j associated molecule (RAM) and ankyrin repeat (ANK) domains, interacts directly with lag-1 (PubMed:10830967, PubMed:16530045, PubMed:18381292, PubMed:9003776).</text>
</comment>
<comment type="subcellular location">
    <subcellularLocation>
        <location evidence="11">Nucleus</location>
    </subcellularLocation>
</comment>
<comment type="alternative products">
    <event type="alternative splicing"/>
    <isoform>
        <id>V6CLJ5-1</id>
        <name evidence="21">d</name>
        <sequence type="displayed"/>
    </isoform>
    <isoform>
        <id>V6CLJ5-2</id>
        <name evidence="19">b</name>
        <sequence type="described" ref="VSP_060947"/>
    </isoform>
    <isoform>
        <id>V6CLJ5-3</id>
        <name evidence="18">a</name>
        <sequence type="described" ref="VSP_060946"/>
    </isoform>
    <isoform>
        <id>V6CLJ5-4</id>
        <name evidence="20">c</name>
        <sequence type="described" ref="VSP_060948"/>
    </isoform>
</comment>
<comment type="tissue specificity">
    <text evidence="11">In young adults, expressed in germ cells in the distal most ~10 cell diameters of the progenitor zone (PZ), and also in late pachytene, diplotene and diakinesis of oogenesis.</text>
</comment>
<comment type="developmental stage">
    <text evidence="10 11 12">Expressed in the precursor anchor cell and ventral uterine precursor cell (Z1.ppp, Z1.ppa, Z4.aaa, and Z4.aap) before cell specification, at early larval stage L2 (PubMed:23615264). Expressed in the ventral uterine cell (VU), but not in the anchor cell (AC), after specification, at late larval stage L2 (PubMed:23615264). Expressed in a dynamic pattern in the vulval precursor cells (VPCs) during vulval induction in larval stage L3 (PubMed:32839181). Expressed in somatic gonad cells, the distal tip cell (DTC), and all sheath and spermathecal cells, as well as in polyploid intestinal cells, in both the larval L4 and adult stages.</text>
</comment>
<comment type="disruption phenotype">
    <text evidence="8">RNAi-mediated knockdown ectopically up-regulates expression of hlh-6 outside pharyngeal gland cells.</text>
</comment>
<comment type="similarity">
    <text evidence="15">Belongs to the Su(H) family.</text>
</comment>
<organism evidence="17">
    <name type="scientific">Caenorhabditis elegans</name>
    <dbReference type="NCBI Taxonomy" id="6239"/>
    <lineage>
        <taxon>Eukaryota</taxon>
        <taxon>Metazoa</taxon>
        <taxon>Ecdysozoa</taxon>
        <taxon>Nematoda</taxon>
        <taxon>Chromadorea</taxon>
        <taxon>Rhabditida</taxon>
        <taxon>Rhabditina</taxon>
        <taxon>Rhabditomorpha</taxon>
        <taxon>Rhabditoidea</taxon>
        <taxon>Rhabditidae</taxon>
        <taxon>Peloderinae</taxon>
        <taxon>Caenorhabditis</taxon>
    </lineage>
</organism>
<protein>
    <recommendedName>
        <fullName evidence="15">Suppressor of hairless protein homolog</fullName>
    </recommendedName>
    <alternativeName>
        <fullName evidence="14 15">CSL transcription factor lag-1</fullName>
    </alternativeName>
    <alternativeName>
        <fullName evidence="21">Lin-12 and glp-1 phenotype protein</fullName>
    </alternativeName>
</protein>
<feature type="chain" id="PRO_0000452277" description="Suppressor of hairless protein homolog">
    <location>
        <begin position="1"/>
        <end position="790"/>
    </location>
</feature>
<feature type="domain" description="IPT/TIG" evidence="2">
    <location>
        <begin position="680"/>
        <end position="776"/>
    </location>
</feature>
<feature type="region of interest" description="Disordered" evidence="3">
    <location>
        <begin position="1"/>
        <end position="27"/>
    </location>
</feature>
<feature type="region of interest" description="Disordered" evidence="3">
    <location>
        <begin position="92"/>
        <end position="125"/>
    </location>
</feature>
<feature type="region of interest" description="DNA-binding" evidence="5 6">
    <location>
        <begin position="343"/>
        <end position="353"/>
    </location>
</feature>
<feature type="region of interest" description="DNA-binding" evidence="5 6">
    <location>
        <begin position="484"/>
        <end position="489"/>
    </location>
</feature>
<feature type="region of interest" description="DNA-binding" evidence="5 6">
    <location>
        <begin position="514"/>
        <end position="519"/>
    </location>
</feature>
<feature type="compositionally biased region" description="Low complexity" evidence="3">
    <location>
        <begin position="97"/>
        <end position="113"/>
    </location>
</feature>
<feature type="splice variant" id="VSP_060946" description="In isoform a.">
    <original>MFSWRRGDCESQKEENRSEERKGEETIRFPTRSPFHCVLFLLTDGFVLHKPTASPTVGFSPTIFSFYYSRWESSHRISHDESGFCTAKTPLQDSTFTRHPSTSVPSSPSTPRHSGMDYHQSSSVASSESTASTVAAAAAAAAAASLNQHHHPHLYCDDGLLSRSLTDMVSSGGYDSSSSSLSAAASMCYPTPDAYYYHAPPPPPPPQAQQGFSSTDAWLQMQMQPTYHNFGSTVVSTNSPLPSHLLSYGGQPAFA</original>
    <variation>MPLAYSTHDNFYESPKTPQPTWDHVHAQFPLGEPARNLDKFIVPEAMFQSVSPLAGVAAAPSQIAALQQIQALMTFQMQQNNLFPKIDTISKSPTPELASPSAKRMRLSPSTSSHSDVASTSKGTNGQDQSKNSPTNS</variation>
    <location>
        <begin position="1"/>
        <end position="255"/>
    </location>
</feature>
<feature type="splice variant" id="VSP_060947" description="In isoform b.">
    <original>MFSWRRGDCESQKEENRSEERKGEETIRFPTRSPFHCVLFLLTDGFVLHKPTASPTVGFSPTIFSFYYSRWESSHRISHDESGFCTAKTPLQDSTFTRHPSTSVPSSPSTPRHSGMDYHQSSSVASSESTASTVAAAAAAAAAASLNQHHHPHLYCDDGLLSRSLTDMVSSGGYDSSSSSLSAAASMCYPTPDAYYYHAPPPPPPPQAQQGFSSTDAWLQMQMQPTYHNFGSTVVSTNSPLPSHLLSYGGQPAFA</original>
    <variation>MPLAYSTHDNFYESPKTPQPTWDHVHAQFPLGEPARNLDKFIEAMFQSVSPLAGVAAAPSQIAALQQIQALMTFQMQQNNLFPKIDTISKSPTPELASPSAKRMRLSPSTSSHSDVASTSKGTNGQDQSKNSPTNS</variation>
    <location>
        <begin position="1"/>
        <end position="255"/>
    </location>
</feature>
<feature type="splice variant" id="VSP_060948" description="In isoform c.">
    <original>MFSWRRGDCESQKEENRSEERKGEETIRFPTRSPFHCVLFLLTDGFVLHKPTASPTVGFSPTIFSFYYSRWESSHRISHDESGFCTAKTPLQDSTFTRHPSTSVPSSPSTPRHSGMDYHQSSSVASSESTASTVAAAAAAAAAASLNQHHHPHLYCDDGLLSRSLTDMVSSGGYDSSSSSLSAAASMCYPTPDAYYYHAPPPPPPPQAQQGFSSTDAWLQMQMQPTYHNFGSTVVSTNSPLPSHLLSYGGQPAFA</original>
    <variation>MFQSVSPLAGVAAAPSQIAALQQIQALMTFQMQQNNLFPKIDTISKSPTPELASPSAKRMRLSPSTSSHSDVASTSKGTNGQDQSKNSPTNS</variation>
    <location>
        <begin position="1"/>
        <end position="255"/>
    </location>
</feature>
<feature type="mutagenesis site" description="In q385; die as L1 larvae with cell transformations that result in the loss of the excretory cell, loss of the rectum and a twisted nose." evidence="13">
    <location>
        <begin position="743"/>
        <end position="790"/>
    </location>
</feature>
<feature type="helix" evidence="27">
    <location>
        <begin position="317"/>
        <end position="325"/>
    </location>
</feature>
<feature type="helix" evidence="27">
    <location>
        <begin position="327"/>
        <end position="330"/>
    </location>
</feature>
<feature type="strand" evidence="27">
    <location>
        <begin position="332"/>
        <end position="343"/>
    </location>
</feature>
<feature type="strand" evidence="27">
    <location>
        <begin position="358"/>
        <end position="363"/>
    </location>
</feature>
<feature type="helix" evidence="27">
    <location>
        <begin position="365"/>
        <end position="375"/>
    </location>
</feature>
<feature type="turn" evidence="27">
    <location>
        <begin position="376"/>
        <end position="379"/>
    </location>
</feature>
<feature type="turn" evidence="26">
    <location>
        <begin position="398"/>
        <end position="401"/>
    </location>
</feature>
<feature type="strand" evidence="27">
    <location>
        <begin position="402"/>
        <end position="408"/>
    </location>
</feature>
<feature type="strand" evidence="26">
    <location>
        <begin position="412"/>
        <end position="414"/>
    </location>
</feature>
<feature type="strand" evidence="25">
    <location>
        <begin position="417"/>
        <end position="419"/>
    </location>
</feature>
<feature type="strand" evidence="27">
    <location>
        <begin position="438"/>
        <end position="443"/>
    </location>
</feature>
<feature type="strand" evidence="27">
    <location>
        <begin position="456"/>
        <end position="458"/>
    </location>
</feature>
<feature type="strand" evidence="27">
    <location>
        <begin position="461"/>
        <end position="466"/>
    </location>
</feature>
<feature type="turn" evidence="26">
    <location>
        <begin position="467"/>
        <end position="469"/>
    </location>
</feature>
<feature type="strand" evidence="27">
    <location>
        <begin position="471"/>
        <end position="476"/>
    </location>
</feature>
<feature type="strand" evidence="27">
    <location>
        <begin position="480"/>
        <end position="485"/>
    </location>
</feature>
<feature type="strand" evidence="25">
    <location>
        <begin position="494"/>
        <end position="496"/>
    </location>
</feature>
<feature type="helix" evidence="27">
    <location>
        <begin position="498"/>
        <end position="501"/>
    </location>
</feature>
<feature type="strand" evidence="27">
    <location>
        <begin position="507"/>
        <end position="513"/>
    </location>
</feature>
<feature type="helix" evidence="27">
    <location>
        <begin position="519"/>
        <end position="521"/>
    </location>
</feature>
<feature type="strand" evidence="27">
    <location>
        <begin position="523"/>
        <end position="528"/>
    </location>
</feature>
<feature type="strand" evidence="27">
    <location>
        <begin position="531"/>
        <end position="537"/>
    </location>
</feature>
<feature type="strand" evidence="27">
    <location>
        <begin position="542"/>
        <end position="547"/>
    </location>
</feature>
<feature type="strand" evidence="27">
    <location>
        <begin position="557"/>
        <end position="562"/>
    </location>
</feature>
<feature type="strand" evidence="25">
    <location>
        <begin position="563"/>
        <end position="565"/>
    </location>
</feature>
<feature type="strand" evidence="25">
    <location>
        <begin position="567"/>
        <end position="569"/>
    </location>
</feature>
<feature type="strand" evidence="27">
    <location>
        <begin position="571"/>
        <end position="576"/>
    </location>
</feature>
<feature type="turn" evidence="27">
    <location>
        <begin position="577"/>
        <end position="579"/>
    </location>
</feature>
<feature type="strand" evidence="27">
    <location>
        <begin position="586"/>
        <end position="592"/>
    </location>
</feature>
<feature type="strand" evidence="27">
    <location>
        <begin position="595"/>
        <end position="597"/>
    </location>
</feature>
<feature type="helix" evidence="27">
    <location>
        <begin position="602"/>
        <end position="604"/>
    </location>
</feature>
<feature type="strand" evidence="27">
    <location>
        <begin position="611"/>
        <end position="619"/>
    </location>
</feature>
<feature type="strand" evidence="27">
    <location>
        <begin position="623"/>
        <end position="628"/>
    </location>
</feature>
<feature type="strand" evidence="27">
    <location>
        <begin position="631"/>
        <end position="636"/>
    </location>
</feature>
<feature type="strand" evidence="27">
    <location>
        <begin position="638"/>
        <end position="641"/>
    </location>
</feature>
<feature type="strand" evidence="27">
    <location>
        <begin position="644"/>
        <end position="646"/>
    </location>
</feature>
<feature type="helix" evidence="27">
    <location>
        <begin position="649"/>
        <end position="651"/>
    </location>
</feature>
<feature type="strand" evidence="27">
    <location>
        <begin position="653"/>
        <end position="667"/>
    </location>
</feature>
<feature type="strand" evidence="27">
    <location>
        <begin position="681"/>
        <end position="688"/>
    </location>
</feature>
<feature type="helix" evidence="27">
    <location>
        <begin position="691"/>
        <end position="693"/>
    </location>
</feature>
<feature type="strand" evidence="27">
    <location>
        <begin position="695"/>
        <end position="701"/>
    </location>
</feature>
<feature type="strand" evidence="27">
    <location>
        <begin position="707"/>
        <end position="711"/>
    </location>
</feature>
<feature type="strand" evidence="27">
    <location>
        <begin position="714"/>
        <end position="716"/>
    </location>
</feature>
<feature type="strand" evidence="27">
    <location>
        <begin position="718"/>
        <end position="722"/>
    </location>
</feature>
<feature type="strand" evidence="27">
    <location>
        <begin position="725"/>
        <end position="729"/>
    </location>
</feature>
<feature type="helix" evidence="27">
    <location>
        <begin position="733"/>
        <end position="736"/>
    </location>
</feature>
<feature type="turn" evidence="27">
    <location>
        <begin position="739"/>
        <end position="741"/>
    </location>
</feature>
<feature type="helix" evidence="27">
    <location>
        <begin position="742"/>
        <end position="745"/>
    </location>
</feature>
<feature type="turn" evidence="27">
    <location>
        <begin position="748"/>
        <end position="750"/>
    </location>
</feature>
<feature type="strand" evidence="27">
    <location>
        <begin position="753"/>
        <end position="761"/>
    </location>
</feature>
<feature type="strand" evidence="27">
    <location>
        <begin position="764"/>
        <end position="774"/>
    </location>
</feature>
<proteinExistence type="evidence at protein level"/>